<proteinExistence type="inferred from homology"/>
<evidence type="ECO:0000255" key="1">
    <source>
        <dbReference type="HAMAP-Rule" id="MF_00255"/>
    </source>
</evidence>
<sequence length="688" mass="78376">MSKDFLLEIGLEEMPAQYVTSSVLQLEKRVTDWLTENKIEFGEIKTYSTPRRLTVLVEGMAEEQANRVEEAKGPAKKIALDDEGNWSKAALGFAKSQKVDPADLTFRDIKGVEYIYIKKEVIGEKTSTLLPNLEKVVTSMTFPVSMHWGSNDLRYIRPIKWLIAMFGEEIIPFEITGVTTSNTSRGHRFLGKSATIKQPSDYPNALLEQFVVVNAEERKQAIVEQLRELESMENWQIKEDDDLLEEVTNLVEYPTVLSGNFEKEYLELPEEVLITTMKEHQRYFPVFSQAGELLPHFVTVRNGNHENLDTVARGNEKVLRARLSDADFFYQEDLKMTIDEAVAKLQNIVFHEKLGTLTEKMKRVQKVALMLADYLDWQEEDKQDIIRLTNIYKFDLVTNIVGEFPELQGLMGEKYALLQGEKPAIATAIREHYLPNSAEGELPQTDLGSLIAIADKLETLIGFFCVNIVPTGSADPFGLRRSAFGAMRIIQANGWDIPMLEVISRIVDMERAEGSAELPGADVKKEVQTFLKNRLRVILQGHHIRHDIIDAVIGGDPNVIPQLIDRAQILNEHAEAEWFRPTIEALSRVVKIAKKYEDGVEVDPALFENEYEQALFDKLEKLKFDYAGLTIIERLKAFADLRTTIDAYFDNTLVMSDNDELKNNRLALLFELASFIKEFAQMDEINVK</sequence>
<accession>B8DE53</accession>
<keyword id="KW-0030">Aminoacyl-tRNA synthetase</keyword>
<keyword id="KW-0067">ATP-binding</keyword>
<keyword id="KW-0963">Cytoplasm</keyword>
<keyword id="KW-0436">Ligase</keyword>
<keyword id="KW-0547">Nucleotide-binding</keyword>
<keyword id="KW-0648">Protein biosynthesis</keyword>
<organism>
    <name type="scientific">Listeria monocytogenes serotype 4a (strain HCC23)</name>
    <dbReference type="NCBI Taxonomy" id="552536"/>
    <lineage>
        <taxon>Bacteria</taxon>
        <taxon>Bacillati</taxon>
        <taxon>Bacillota</taxon>
        <taxon>Bacilli</taxon>
        <taxon>Bacillales</taxon>
        <taxon>Listeriaceae</taxon>
        <taxon>Listeria</taxon>
    </lineage>
</organism>
<protein>
    <recommendedName>
        <fullName evidence="1">Glycine--tRNA ligase beta subunit</fullName>
        <ecNumber evidence="1">6.1.1.14</ecNumber>
    </recommendedName>
    <alternativeName>
        <fullName evidence="1">Glycyl-tRNA synthetase beta subunit</fullName>
        <shortName evidence="1">GlyRS</shortName>
    </alternativeName>
</protein>
<comment type="catalytic activity">
    <reaction evidence="1">
        <text>tRNA(Gly) + glycine + ATP = glycyl-tRNA(Gly) + AMP + diphosphate</text>
        <dbReference type="Rhea" id="RHEA:16013"/>
        <dbReference type="Rhea" id="RHEA-COMP:9664"/>
        <dbReference type="Rhea" id="RHEA-COMP:9683"/>
        <dbReference type="ChEBI" id="CHEBI:30616"/>
        <dbReference type="ChEBI" id="CHEBI:33019"/>
        <dbReference type="ChEBI" id="CHEBI:57305"/>
        <dbReference type="ChEBI" id="CHEBI:78442"/>
        <dbReference type="ChEBI" id="CHEBI:78522"/>
        <dbReference type="ChEBI" id="CHEBI:456215"/>
        <dbReference type="EC" id="6.1.1.14"/>
    </reaction>
</comment>
<comment type="subunit">
    <text evidence="1">Tetramer of two alpha and two beta subunits.</text>
</comment>
<comment type="subcellular location">
    <subcellularLocation>
        <location evidence="1">Cytoplasm</location>
    </subcellularLocation>
</comment>
<comment type="similarity">
    <text evidence="1">Belongs to the class-II aminoacyl-tRNA synthetase family.</text>
</comment>
<feature type="chain" id="PRO_1000197205" description="Glycine--tRNA ligase beta subunit">
    <location>
        <begin position="1"/>
        <end position="688"/>
    </location>
</feature>
<gene>
    <name evidence="1" type="primary">glyS</name>
    <name type="ordered locus">LMHCC_1112</name>
</gene>
<name>SYGB_LISMH</name>
<dbReference type="EC" id="6.1.1.14" evidence="1"/>
<dbReference type="EMBL" id="CP001175">
    <property type="protein sequence ID" value="ACK39460.1"/>
    <property type="molecule type" value="Genomic_DNA"/>
</dbReference>
<dbReference type="RefSeq" id="WP_012581310.1">
    <property type="nucleotide sequence ID" value="NC_011660.1"/>
</dbReference>
<dbReference type="SMR" id="B8DE53"/>
<dbReference type="KEGG" id="lmh:LMHCC_1112"/>
<dbReference type="HOGENOM" id="CLU_007220_2_2_9"/>
<dbReference type="GO" id="GO:0005829">
    <property type="term" value="C:cytosol"/>
    <property type="evidence" value="ECO:0007669"/>
    <property type="project" value="TreeGrafter"/>
</dbReference>
<dbReference type="GO" id="GO:0005524">
    <property type="term" value="F:ATP binding"/>
    <property type="evidence" value="ECO:0007669"/>
    <property type="project" value="UniProtKB-UniRule"/>
</dbReference>
<dbReference type="GO" id="GO:0004820">
    <property type="term" value="F:glycine-tRNA ligase activity"/>
    <property type="evidence" value="ECO:0007669"/>
    <property type="project" value="UniProtKB-UniRule"/>
</dbReference>
<dbReference type="GO" id="GO:0006426">
    <property type="term" value="P:glycyl-tRNA aminoacylation"/>
    <property type="evidence" value="ECO:0007669"/>
    <property type="project" value="UniProtKB-UniRule"/>
</dbReference>
<dbReference type="HAMAP" id="MF_00255">
    <property type="entry name" value="Gly_tRNA_synth_beta"/>
    <property type="match status" value="1"/>
</dbReference>
<dbReference type="InterPro" id="IPR015944">
    <property type="entry name" value="Gly-tRNA-synth_bsu"/>
</dbReference>
<dbReference type="InterPro" id="IPR006194">
    <property type="entry name" value="Gly-tRNA-synth_heterodimer"/>
</dbReference>
<dbReference type="NCBIfam" id="TIGR00211">
    <property type="entry name" value="glyS"/>
    <property type="match status" value="1"/>
</dbReference>
<dbReference type="PANTHER" id="PTHR30075:SF2">
    <property type="entry name" value="GLYCINE--TRNA LIGASE, CHLOROPLASTIC_MITOCHONDRIAL 2"/>
    <property type="match status" value="1"/>
</dbReference>
<dbReference type="PANTHER" id="PTHR30075">
    <property type="entry name" value="GLYCYL-TRNA SYNTHETASE"/>
    <property type="match status" value="1"/>
</dbReference>
<dbReference type="Pfam" id="PF02092">
    <property type="entry name" value="tRNA_synt_2f"/>
    <property type="match status" value="1"/>
</dbReference>
<dbReference type="PRINTS" id="PR01045">
    <property type="entry name" value="TRNASYNTHGB"/>
</dbReference>
<dbReference type="SUPFAM" id="SSF109604">
    <property type="entry name" value="HD-domain/PDEase-like"/>
    <property type="match status" value="1"/>
</dbReference>
<dbReference type="PROSITE" id="PS50861">
    <property type="entry name" value="AA_TRNA_LIGASE_II_GLYAB"/>
    <property type="match status" value="1"/>
</dbReference>
<reference key="1">
    <citation type="journal article" date="2011" name="J. Bacteriol.">
        <title>Genome sequence of lineage III Listeria monocytogenes strain HCC23.</title>
        <authorList>
            <person name="Steele C.L."/>
            <person name="Donaldson J.R."/>
            <person name="Paul D."/>
            <person name="Banes M.M."/>
            <person name="Arick T."/>
            <person name="Bridges S.M."/>
            <person name="Lawrence M.L."/>
        </authorList>
    </citation>
    <scope>NUCLEOTIDE SEQUENCE [LARGE SCALE GENOMIC DNA]</scope>
    <source>
        <strain>HCC23</strain>
    </source>
</reference>